<feature type="chain" id="PRO_1000016624" description="tRNA uridine 5-carboxymethylaminomethyl modification enzyme MnmG">
    <location>
        <begin position="1"/>
        <end position="619"/>
    </location>
</feature>
<feature type="binding site" evidence="1">
    <location>
        <begin position="18"/>
        <end position="23"/>
    </location>
    <ligand>
        <name>FAD</name>
        <dbReference type="ChEBI" id="CHEBI:57692"/>
    </ligand>
</feature>
<feature type="binding site" evidence="1">
    <location>
        <position position="130"/>
    </location>
    <ligand>
        <name>FAD</name>
        <dbReference type="ChEBI" id="CHEBI:57692"/>
    </ligand>
</feature>
<feature type="binding site" evidence="1">
    <location>
        <position position="185"/>
    </location>
    <ligand>
        <name>FAD</name>
        <dbReference type="ChEBI" id="CHEBI:57692"/>
    </ligand>
</feature>
<feature type="binding site" evidence="1">
    <location>
        <begin position="277"/>
        <end position="291"/>
    </location>
    <ligand>
        <name>NAD(+)</name>
        <dbReference type="ChEBI" id="CHEBI:57540"/>
    </ligand>
</feature>
<feature type="binding site" evidence="1">
    <location>
        <position position="374"/>
    </location>
    <ligand>
        <name>FAD</name>
        <dbReference type="ChEBI" id="CHEBI:57692"/>
    </ligand>
</feature>
<name>MNMG_MESH7</name>
<sequence>MSKKSKNSSIEFDAIVVGGGHAGIEAVYALLKKKLKVVLITLDKKKLASMPCNPAIGGPAKGIITREIDALGGVQGKFSDLAMIQIKYLNESKGPAVLAIRAQIDKEKYSKLILKDLKKQENLLIIEDLVSELLVEKNRVFGLKTAKKQVFFSKTVIITTGTYMDSKVLRGSLAIPSGPDGQQTSNLLSNNLKRLGFELQRLKTGTPPRIFTSSIDFSKVEKEVLPVYNINFSFQSKHKLKKQISCYLTYTTAKTHDIINKNLGKSSMYSGLISGVGPRYCPSIEDKIVRFSEKPRHQIFFEPETKKQDIMYINGLSTSMPEDVQLEMVKTIPGLENAKIAKFGYAIEYDALNPLELKKSLETKKVKGLFMAGQINGTSGYEEAAAQGLVAGINAGQFVLGKKPVEILRNDGYIGVLIDDLVTKGTKEPYRMLTSRAEYRLILRNDNADIRMAKYALKSGLISKKEYLKIKAKYAKIDRKILELSKEFVSPKDELAKKYNLEKRISKLKLISWPNVNFKDILPDFEFGYELTVMARLKGYIQKQNSEAQKMIRLEKLLIPGDLNYEKVANLSSEALDKFQKVRPKTIGEASRISGVNPADIQMLLFHIKVLKMQKVSKI</sequence>
<keyword id="KW-0963">Cytoplasm</keyword>
<keyword id="KW-0274">FAD</keyword>
<keyword id="KW-0285">Flavoprotein</keyword>
<keyword id="KW-0520">NAD</keyword>
<keyword id="KW-0819">tRNA processing</keyword>
<accession>Q4A909</accession>
<reference key="1">
    <citation type="journal article" date="2005" name="J. Bacteriol.">
        <title>Swine and poultry pathogens: the complete genome sequences of two strains of Mycoplasma hyopneumoniae and a strain of Mycoplasma synoviae.</title>
        <authorList>
            <person name="Vasconcelos A.T.R."/>
            <person name="Ferreira H.B."/>
            <person name="Bizarro C.V."/>
            <person name="Bonatto S.L."/>
            <person name="Carvalho M.O."/>
            <person name="Pinto P.M."/>
            <person name="Almeida D.F."/>
            <person name="Almeida L.G.P."/>
            <person name="Almeida R."/>
            <person name="Alves-Junior L."/>
            <person name="Assuncao E.N."/>
            <person name="Azevedo V.A.C."/>
            <person name="Bogo M.R."/>
            <person name="Brigido M.M."/>
            <person name="Brocchi M."/>
            <person name="Burity H.A."/>
            <person name="Camargo A.A."/>
            <person name="Camargo S.S."/>
            <person name="Carepo M.S."/>
            <person name="Carraro D.M."/>
            <person name="de Mattos Cascardo J.C."/>
            <person name="Castro L.A."/>
            <person name="Cavalcanti G."/>
            <person name="Chemale G."/>
            <person name="Collevatti R.G."/>
            <person name="Cunha C.W."/>
            <person name="Dallagiovanna B."/>
            <person name="Dambros B.P."/>
            <person name="Dellagostin O.A."/>
            <person name="Falcao C."/>
            <person name="Fantinatti-Garboggini F."/>
            <person name="Felipe M.S.S."/>
            <person name="Fiorentin L."/>
            <person name="Franco G.R."/>
            <person name="Freitas N.S.A."/>
            <person name="Frias D."/>
            <person name="Grangeiro T.B."/>
            <person name="Grisard E.C."/>
            <person name="Guimaraes C.T."/>
            <person name="Hungria M."/>
            <person name="Jardim S.N."/>
            <person name="Krieger M.A."/>
            <person name="Laurino J.P."/>
            <person name="Lima L.F.A."/>
            <person name="Lopes M.I."/>
            <person name="Loreto E.L.S."/>
            <person name="Madeira H.M.F."/>
            <person name="Manfio G.P."/>
            <person name="Maranhao A.Q."/>
            <person name="Martinkovics C.T."/>
            <person name="Medeiros S.R.B."/>
            <person name="Moreira M.A.M."/>
            <person name="Neiva M."/>
            <person name="Ramalho-Neto C.E."/>
            <person name="Nicolas M.F."/>
            <person name="Oliveira S.C."/>
            <person name="Paixao R.F.C."/>
            <person name="Pedrosa F.O."/>
            <person name="Pena S.D.J."/>
            <person name="Pereira M."/>
            <person name="Pereira-Ferrari L."/>
            <person name="Piffer I."/>
            <person name="Pinto L.S."/>
            <person name="Potrich D.P."/>
            <person name="Salim A.C.M."/>
            <person name="Santos F.R."/>
            <person name="Schmitt R."/>
            <person name="Schneider M.P.C."/>
            <person name="Schrank A."/>
            <person name="Schrank I.S."/>
            <person name="Schuck A.F."/>
            <person name="Seuanez H.N."/>
            <person name="Silva D.W."/>
            <person name="Silva R."/>
            <person name="Silva S.C."/>
            <person name="Soares C.M.A."/>
            <person name="Souza K.R.L."/>
            <person name="Souza R.C."/>
            <person name="Staats C.C."/>
            <person name="Steffens M.B.R."/>
            <person name="Teixeira S.M.R."/>
            <person name="Urmenyi T.P."/>
            <person name="Vainstein M.H."/>
            <person name="Zuccherato L.W."/>
            <person name="Simpson A.J.G."/>
            <person name="Zaha A."/>
        </authorList>
    </citation>
    <scope>NUCLEOTIDE SEQUENCE [LARGE SCALE GENOMIC DNA]</scope>
    <source>
        <strain>7448</strain>
    </source>
</reference>
<dbReference type="EMBL" id="AE017244">
    <property type="protein sequence ID" value="AAZ53380.2"/>
    <property type="molecule type" value="Genomic_DNA"/>
</dbReference>
<dbReference type="RefSeq" id="WP_044272256.1">
    <property type="nucleotide sequence ID" value="NC_007332.1"/>
</dbReference>
<dbReference type="SMR" id="Q4A909"/>
<dbReference type="KEGG" id="mhp:MHP7448_0003"/>
<dbReference type="HOGENOM" id="CLU_007831_2_2_14"/>
<dbReference type="Proteomes" id="UP000000553">
    <property type="component" value="Chromosome"/>
</dbReference>
<dbReference type="GO" id="GO:0005829">
    <property type="term" value="C:cytosol"/>
    <property type="evidence" value="ECO:0007669"/>
    <property type="project" value="TreeGrafter"/>
</dbReference>
<dbReference type="GO" id="GO:0050660">
    <property type="term" value="F:flavin adenine dinucleotide binding"/>
    <property type="evidence" value="ECO:0007669"/>
    <property type="project" value="UniProtKB-UniRule"/>
</dbReference>
<dbReference type="GO" id="GO:0030488">
    <property type="term" value="P:tRNA methylation"/>
    <property type="evidence" value="ECO:0007669"/>
    <property type="project" value="TreeGrafter"/>
</dbReference>
<dbReference type="GO" id="GO:0002098">
    <property type="term" value="P:tRNA wobble uridine modification"/>
    <property type="evidence" value="ECO:0007669"/>
    <property type="project" value="InterPro"/>
</dbReference>
<dbReference type="FunFam" id="1.10.150.570:FF:000001">
    <property type="entry name" value="tRNA uridine 5-carboxymethylaminomethyl modification enzyme MnmG"/>
    <property type="match status" value="1"/>
</dbReference>
<dbReference type="FunFam" id="3.50.50.60:FF:000002">
    <property type="entry name" value="tRNA uridine 5-carboxymethylaminomethyl modification enzyme MnmG"/>
    <property type="match status" value="1"/>
</dbReference>
<dbReference type="Gene3D" id="3.50.50.60">
    <property type="entry name" value="FAD/NAD(P)-binding domain"/>
    <property type="match status" value="2"/>
</dbReference>
<dbReference type="Gene3D" id="1.10.150.570">
    <property type="entry name" value="GidA associated domain, C-terminal subdomain"/>
    <property type="match status" value="1"/>
</dbReference>
<dbReference type="HAMAP" id="MF_00129">
    <property type="entry name" value="MnmG_GidA"/>
    <property type="match status" value="1"/>
</dbReference>
<dbReference type="InterPro" id="IPR036188">
    <property type="entry name" value="FAD/NAD-bd_sf"/>
</dbReference>
<dbReference type="InterPro" id="IPR004416">
    <property type="entry name" value="MnmG"/>
</dbReference>
<dbReference type="InterPro" id="IPR002218">
    <property type="entry name" value="MnmG-rel"/>
</dbReference>
<dbReference type="InterPro" id="IPR020595">
    <property type="entry name" value="MnmG-rel_CS"/>
</dbReference>
<dbReference type="InterPro" id="IPR026904">
    <property type="entry name" value="MnmG_C"/>
</dbReference>
<dbReference type="InterPro" id="IPR047001">
    <property type="entry name" value="MnmG_C_subdom"/>
</dbReference>
<dbReference type="InterPro" id="IPR044920">
    <property type="entry name" value="MnmG_C_subdom_sf"/>
</dbReference>
<dbReference type="InterPro" id="IPR040131">
    <property type="entry name" value="MnmG_N"/>
</dbReference>
<dbReference type="NCBIfam" id="TIGR00136">
    <property type="entry name" value="mnmG_gidA"/>
    <property type="match status" value="1"/>
</dbReference>
<dbReference type="PANTHER" id="PTHR11806">
    <property type="entry name" value="GLUCOSE INHIBITED DIVISION PROTEIN A"/>
    <property type="match status" value="1"/>
</dbReference>
<dbReference type="PANTHER" id="PTHR11806:SF0">
    <property type="entry name" value="PROTEIN MTO1 HOMOLOG, MITOCHONDRIAL"/>
    <property type="match status" value="1"/>
</dbReference>
<dbReference type="Pfam" id="PF01134">
    <property type="entry name" value="GIDA"/>
    <property type="match status" value="1"/>
</dbReference>
<dbReference type="Pfam" id="PF13932">
    <property type="entry name" value="SAM_GIDA_C"/>
    <property type="match status" value="1"/>
</dbReference>
<dbReference type="SMART" id="SM01228">
    <property type="entry name" value="GIDA_assoc_3"/>
    <property type="match status" value="1"/>
</dbReference>
<dbReference type="SUPFAM" id="SSF51905">
    <property type="entry name" value="FAD/NAD(P)-binding domain"/>
    <property type="match status" value="1"/>
</dbReference>
<dbReference type="PROSITE" id="PS01280">
    <property type="entry name" value="GIDA_1"/>
    <property type="match status" value="1"/>
</dbReference>
<dbReference type="PROSITE" id="PS01281">
    <property type="entry name" value="GIDA_2"/>
    <property type="match status" value="1"/>
</dbReference>
<gene>
    <name evidence="1" type="primary">mnmG</name>
    <name evidence="1" type="synonym">gidA</name>
    <name type="ordered locus">MHP7448_0003</name>
</gene>
<organism>
    <name type="scientific">Mesomycoplasma hyopneumoniae (strain 7448)</name>
    <name type="common">Mycoplasma hyopneumoniae</name>
    <dbReference type="NCBI Taxonomy" id="262722"/>
    <lineage>
        <taxon>Bacteria</taxon>
        <taxon>Bacillati</taxon>
        <taxon>Mycoplasmatota</taxon>
        <taxon>Mycoplasmoidales</taxon>
        <taxon>Metamycoplasmataceae</taxon>
        <taxon>Mesomycoplasma</taxon>
    </lineage>
</organism>
<protein>
    <recommendedName>
        <fullName evidence="1">tRNA uridine 5-carboxymethylaminomethyl modification enzyme MnmG</fullName>
    </recommendedName>
    <alternativeName>
        <fullName evidence="1">Glucose-inhibited division protein A</fullName>
    </alternativeName>
</protein>
<evidence type="ECO:0000255" key="1">
    <source>
        <dbReference type="HAMAP-Rule" id="MF_00129"/>
    </source>
</evidence>
<comment type="function">
    <text evidence="1">NAD-binding protein involved in the addition of a carboxymethylaminomethyl (cmnm) group at the wobble position (U34) of certain tRNAs, forming tRNA-cmnm(5)s(2)U34.</text>
</comment>
<comment type="cofactor">
    <cofactor evidence="1">
        <name>FAD</name>
        <dbReference type="ChEBI" id="CHEBI:57692"/>
    </cofactor>
</comment>
<comment type="subunit">
    <text evidence="1">Homodimer. Heterotetramer of two MnmE and two MnmG subunits.</text>
</comment>
<comment type="subcellular location">
    <subcellularLocation>
        <location evidence="1">Cytoplasm</location>
    </subcellularLocation>
</comment>
<comment type="similarity">
    <text evidence="1">Belongs to the MnmG family.</text>
</comment>
<proteinExistence type="inferred from homology"/>